<gene>
    <name type="primary">CYP78A11</name>
    <name type="synonym">PLA1</name>
    <name type="ordered locus">Os10g0403000</name>
    <name type="ordered locus">LOC_Os10g26340</name>
    <name type="ORF">OSJNBa0044A10.17</name>
</gene>
<protein>
    <recommendedName>
        <fullName>Cytochrome P450 78A11</fullName>
        <ecNumber>1.14.-.-</ecNumber>
    </recommendedName>
    <alternativeName>
        <fullName>Protein PLASTOCHRON1</fullName>
    </alternativeName>
</protein>
<keyword id="KW-0217">Developmental protein</keyword>
<keyword id="KW-0341">Growth regulation</keyword>
<keyword id="KW-0349">Heme</keyword>
<keyword id="KW-0408">Iron</keyword>
<keyword id="KW-0472">Membrane</keyword>
<keyword id="KW-0479">Metal-binding</keyword>
<keyword id="KW-0503">Monooxygenase</keyword>
<keyword id="KW-0560">Oxidoreductase</keyword>
<keyword id="KW-1185">Reference proteome</keyword>
<keyword id="KW-0812">Transmembrane</keyword>
<keyword id="KW-1133">Transmembrane helix</keyword>
<dbReference type="EC" id="1.14.-.-"/>
<dbReference type="EMBL" id="AB096259">
    <property type="protein sequence ID" value="BAC76730.1"/>
    <property type="molecule type" value="mRNA"/>
</dbReference>
<dbReference type="EMBL" id="AC083943">
    <property type="protein sequence ID" value="AAM74277.1"/>
    <property type="molecule type" value="Genomic_DNA"/>
</dbReference>
<dbReference type="EMBL" id="DP000086">
    <property type="protein sequence ID" value="AAP53669.1"/>
    <property type="molecule type" value="Genomic_DNA"/>
</dbReference>
<dbReference type="EMBL" id="AP008216">
    <property type="protein sequence ID" value="BAF26466.1"/>
    <property type="molecule type" value="Genomic_DNA"/>
</dbReference>
<dbReference type="EMBL" id="AP014966">
    <property type="protein sequence ID" value="BAT10751.1"/>
    <property type="molecule type" value="Genomic_DNA"/>
</dbReference>
<dbReference type="RefSeq" id="XP_015613477.1">
    <property type="nucleotide sequence ID" value="XM_015757991.1"/>
</dbReference>
<dbReference type="SMR" id="Q7Y1V5"/>
<dbReference type="FunCoup" id="Q7Y1V5">
    <property type="interactions" value="142"/>
</dbReference>
<dbReference type="STRING" id="39947.Q7Y1V5"/>
<dbReference type="PaxDb" id="39947-Q7Y1V5"/>
<dbReference type="EnsemblPlants" id="Os10t0403000-01">
    <property type="protein sequence ID" value="Os10t0403000-01"/>
    <property type="gene ID" value="Os10g0403000"/>
</dbReference>
<dbReference type="Gramene" id="Os10t0403000-01">
    <property type="protein sequence ID" value="Os10t0403000-01"/>
    <property type="gene ID" value="Os10g0403000"/>
</dbReference>
<dbReference type="KEGG" id="dosa:Os10g0403000"/>
<dbReference type="eggNOG" id="KOG0156">
    <property type="taxonomic scope" value="Eukaryota"/>
</dbReference>
<dbReference type="HOGENOM" id="CLU_001570_4_0_1"/>
<dbReference type="InParanoid" id="Q7Y1V5"/>
<dbReference type="OMA" id="RRFAMTT"/>
<dbReference type="OrthoDB" id="740118at2759"/>
<dbReference type="PlantReactome" id="R-OSA-9627657">
    <property type="pathway name" value="Regulation of leaf development"/>
</dbReference>
<dbReference type="Proteomes" id="UP000000763">
    <property type="component" value="Chromosome 10"/>
</dbReference>
<dbReference type="Proteomes" id="UP000059680">
    <property type="component" value="Chromosome 10"/>
</dbReference>
<dbReference type="GO" id="GO:0016020">
    <property type="term" value="C:membrane"/>
    <property type="evidence" value="ECO:0007669"/>
    <property type="project" value="UniProtKB-SubCell"/>
</dbReference>
<dbReference type="GO" id="GO:0020037">
    <property type="term" value="F:heme binding"/>
    <property type="evidence" value="ECO:0007669"/>
    <property type="project" value="InterPro"/>
</dbReference>
<dbReference type="GO" id="GO:0005506">
    <property type="term" value="F:iron ion binding"/>
    <property type="evidence" value="ECO:0007669"/>
    <property type="project" value="InterPro"/>
</dbReference>
<dbReference type="GO" id="GO:0004497">
    <property type="term" value="F:monooxygenase activity"/>
    <property type="evidence" value="ECO:0007669"/>
    <property type="project" value="UniProtKB-KW"/>
</dbReference>
<dbReference type="GO" id="GO:0016705">
    <property type="term" value="F:oxidoreductase activity, acting on paired donors, with incorporation or reduction of molecular oxygen"/>
    <property type="evidence" value="ECO:0007669"/>
    <property type="project" value="InterPro"/>
</dbReference>
<dbReference type="GO" id="GO:0090709">
    <property type="term" value="P:regulation of timing of plant organ formation"/>
    <property type="evidence" value="ECO:0000315"/>
    <property type="project" value="UniProtKB"/>
</dbReference>
<dbReference type="CDD" id="cd11076">
    <property type="entry name" value="CYP78"/>
    <property type="match status" value="1"/>
</dbReference>
<dbReference type="FunFam" id="1.10.630.10:FF:000016">
    <property type="entry name" value="Cytochrome P450 78A5"/>
    <property type="match status" value="1"/>
</dbReference>
<dbReference type="Gene3D" id="1.10.630.10">
    <property type="entry name" value="Cytochrome P450"/>
    <property type="match status" value="1"/>
</dbReference>
<dbReference type="InterPro" id="IPR001128">
    <property type="entry name" value="Cyt_P450"/>
</dbReference>
<dbReference type="InterPro" id="IPR017972">
    <property type="entry name" value="Cyt_P450_CS"/>
</dbReference>
<dbReference type="InterPro" id="IPR002401">
    <property type="entry name" value="Cyt_P450_E_grp-I"/>
</dbReference>
<dbReference type="InterPro" id="IPR036396">
    <property type="entry name" value="Cyt_P450_sf"/>
</dbReference>
<dbReference type="InterPro" id="IPR051996">
    <property type="entry name" value="Cytochrome_P450_78A"/>
</dbReference>
<dbReference type="PANTHER" id="PTHR47946:SF6">
    <property type="entry name" value="CYTOCHROME P450 78A7"/>
    <property type="match status" value="1"/>
</dbReference>
<dbReference type="PANTHER" id="PTHR47946">
    <property type="entry name" value="CYTOCHROME P450 78A7-RELATED"/>
    <property type="match status" value="1"/>
</dbReference>
<dbReference type="Pfam" id="PF00067">
    <property type="entry name" value="p450"/>
    <property type="match status" value="1"/>
</dbReference>
<dbReference type="PRINTS" id="PR00463">
    <property type="entry name" value="EP450I"/>
</dbReference>
<dbReference type="PRINTS" id="PR00385">
    <property type="entry name" value="P450"/>
</dbReference>
<dbReference type="SUPFAM" id="SSF48264">
    <property type="entry name" value="Cytochrome P450"/>
    <property type="match status" value="1"/>
</dbReference>
<dbReference type="PROSITE" id="PS00086">
    <property type="entry name" value="CYTOCHROME_P450"/>
    <property type="match status" value="1"/>
</dbReference>
<reference key="1">
    <citation type="journal article" date="2004" name="Proc. Natl. Acad. Sci. U.S.A.">
        <title>PLASTOCHRON1, a timekeeper of leaf initiation in rice, encodes cytochrome P450.</title>
        <authorList>
            <person name="Miyoshi K."/>
            <person name="Ahn B.-O."/>
            <person name="Kawakatsu T."/>
            <person name="Ito Y."/>
            <person name="Itoh J."/>
            <person name="Nagato Y."/>
            <person name="Kurata N."/>
        </authorList>
    </citation>
    <scope>NUCLEOTIDE SEQUENCE [MRNA]</scope>
    <scope>FUNCTION</scope>
    <scope>TISSUE SPECIFICITY</scope>
    <scope>DEVELOPMENTAL STAGE</scope>
    <scope>MUTAGENESIS OF ALA-421 AND PRO-496</scope>
    <scope>DISRUPTION PHENOTYPE</scope>
    <source>
        <strain>cv. Nipponbare</strain>
    </source>
</reference>
<reference key="2">
    <citation type="journal article" date="2003" name="Science">
        <title>In-depth view of structure, activity, and evolution of rice chromosome 10.</title>
        <authorList>
            <person name="Yu Y."/>
            <person name="Rambo T."/>
            <person name="Currie J."/>
            <person name="Saski C."/>
            <person name="Kim H.-R."/>
            <person name="Collura K."/>
            <person name="Thompson S."/>
            <person name="Simmons J."/>
            <person name="Yang T.-J."/>
            <person name="Nah G."/>
            <person name="Patel A.J."/>
            <person name="Thurmond S."/>
            <person name="Henry D."/>
            <person name="Oates R."/>
            <person name="Palmer M."/>
            <person name="Pries G."/>
            <person name="Gibson J."/>
            <person name="Anderson H."/>
            <person name="Paradkar M."/>
            <person name="Crane L."/>
            <person name="Dale J."/>
            <person name="Carver M.B."/>
            <person name="Wood T."/>
            <person name="Frisch D."/>
            <person name="Engler F."/>
            <person name="Soderlund C."/>
            <person name="Palmer L.E."/>
            <person name="Teytelman L."/>
            <person name="Nascimento L."/>
            <person name="De la Bastide M."/>
            <person name="Spiegel L."/>
            <person name="Ware D."/>
            <person name="O'Shaughnessy A."/>
            <person name="Dike S."/>
            <person name="Dedhia N."/>
            <person name="Preston R."/>
            <person name="Huang E."/>
            <person name="Ferraro K."/>
            <person name="Kuit K."/>
            <person name="Miller B."/>
            <person name="Zutavern T."/>
            <person name="Katzenberger F."/>
            <person name="Muller S."/>
            <person name="Balija V."/>
            <person name="Martienssen R.A."/>
            <person name="Stein L."/>
            <person name="Minx P."/>
            <person name="Johnson D."/>
            <person name="Cordum H."/>
            <person name="Mardis E."/>
            <person name="Cheng Z."/>
            <person name="Jiang J."/>
            <person name="Wilson R."/>
            <person name="McCombie W.R."/>
            <person name="Wing R.A."/>
            <person name="Yuan Q."/>
            <person name="Ouyang S."/>
            <person name="Liu J."/>
            <person name="Jones K.M."/>
            <person name="Gansberger K."/>
            <person name="Moffat K."/>
            <person name="Hill J."/>
            <person name="Tsitrin T."/>
            <person name="Overton L."/>
            <person name="Bera J."/>
            <person name="Kim M."/>
            <person name="Jin S."/>
            <person name="Tallon L."/>
            <person name="Ciecko A."/>
            <person name="Pai G."/>
            <person name="Van Aken S."/>
            <person name="Utterback T."/>
            <person name="Reidmuller S."/>
            <person name="Bormann J."/>
            <person name="Feldblyum T."/>
            <person name="Hsiao J."/>
            <person name="Zismann V."/>
            <person name="Blunt S."/>
            <person name="de Vazeille A.R."/>
            <person name="Shaffer T."/>
            <person name="Koo H."/>
            <person name="Suh B."/>
            <person name="Yang Q."/>
            <person name="Haas B."/>
            <person name="Peterson J."/>
            <person name="Pertea M."/>
            <person name="Volfovsky N."/>
            <person name="Wortman J."/>
            <person name="White O."/>
            <person name="Salzberg S.L."/>
            <person name="Fraser C.M."/>
            <person name="Buell C.R."/>
            <person name="Messing J."/>
            <person name="Song R."/>
            <person name="Fuks G."/>
            <person name="Llaca V."/>
            <person name="Kovchak S."/>
            <person name="Young S."/>
            <person name="Bowers J.E."/>
            <person name="Paterson A.H."/>
            <person name="Johns M.A."/>
            <person name="Mao L."/>
            <person name="Pan H."/>
            <person name="Dean R.A."/>
        </authorList>
    </citation>
    <scope>NUCLEOTIDE SEQUENCE [LARGE SCALE GENOMIC DNA]</scope>
    <source>
        <strain>cv. Nipponbare</strain>
    </source>
</reference>
<reference key="3">
    <citation type="journal article" date="2005" name="Nature">
        <title>The map-based sequence of the rice genome.</title>
        <authorList>
            <consortium name="International rice genome sequencing project (IRGSP)"/>
        </authorList>
    </citation>
    <scope>NUCLEOTIDE SEQUENCE [LARGE SCALE GENOMIC DNA]</scope>
    <source>
        <strain>cv. Nipponbare</strain>
    </source>
</reference>
<reference key="4">
    <citation type="journal article" date="2008" name="Nucleic Acids Res.">
        <title>The rice annotation project database (RAP-DB): 2008 update.</title>
        <authorList>
            <consortium name="The rice annotation project (RAP)"/>
        </authorList>
    </citation>
    <scope>GENOME REANNOTATION</scope>
    <source>
        <strain>cv. Nipponbare</strain>
    </source>
</reference>
<reference key="5">
    <citation type="journal article" date="2013" name="Rice">
        <title>Improvement of the Oryza sativa Nipponbare reference genome using next generation sequence and optical map data.</title>
        <authorList>
            <person name="Kawahara Y."/>
            <person name="de la Bastide M."/>
            <person name="Hamilton J.P."/>
            <person name="Kanamori H."/>
            <person name="McCombie W.R."/>
            <person name="Ouyang S."/>
            <person name="Schwartz D.C."/>
            <person name="Tanaka T."/>
            <person name="Wu J."/>
            <person name="Zhou S."/>
            <person name="Childs K.L."/>
            <person name="Davidson R.M."/>
            <person name="Lin H."/>
            <person name="Quesada-Ocampo L."/>
            <person name="Vaillancourt B."/>
            <person name="Sakai H."/>
            <person name="Lee S.S."/>
            <person name="Kim J."/>
            <person name="Numa H."/>
            <person name="Itoh T."/>
            <person name="Buell C.R."/>
            <person name="Matsumoto T."/>
        </authorList>
    </citation>
    <scope>GENOME REANNOTATION</scope>
    <source>
        <strain>cv. Nipponbare</strain>
    </source>
</reference>
<reference key="6">
    <citation type="journal article" date="1998" name="Plant Cell">
        <title>A recessive heterochronic mutation, plastochron1, shortens the plastochron and elongates the vegetative phase in rice.</title>
        <authorList>
            <person name="Itoh J."/>
            <person name="Hasegawa A."/>
            <person name="Kitano H."/>
            <person name="Nagato Y."/>
        </authorList>
    </citation>
    <scope>DISRUPTION PHENOTYPE</scope>
</reference>
<reference key="7">
    <citation type="journal article" date="2009" name="Cell Res.">
        <title>NECK LEAF 1, a GATA type transcription factor, modulates organogenesis by regulating the expression of multiple regulatory genes during reproductive development in rice.</title>
        <authorList>
            <person name="Wang L."/>
            <person name="Yin H."/>
            <person name="Qian Q."/>
            <person name="Yang J."/>
            <person name="Huang C."/>
            <person name="Hu X."/>
            <person name="Luo D."/>
        </authorList>
    </citation>
    <scope>DISRUPTION PHENOTYPE</scope>
</reference>
<evidence type="ECO:0000250" key="1"/>
<evidence type="ECO:0000255" key="2"/>
<evidence type="ECO:0000269" key="3">
    <source>
    </source>
</evidence>
<evidence type="ECO:0000269" key="4">
    <source>
    </source>
</evidence>
<evidence type="ECO:0000269" key="5">
    <source>
    </source>
</evidence>
<evidence type="ECO:0000305" key="6"/>
<proteinExistence type="evidence at protein level"/>
<name>C78AB_ORYSJ</name>
<feature type="chain" id="PRO_0000052151" description="Cytochrome P450 78A11">
    <location>
        <begin position="1"/>
        <end position="555"/>
    </location>
</feature>
<feature type="transmembrane region" description="Helical" evidence="2">
    <location>
        <begin position="12"/>
        <end position="32"/>
    </location>
</feature>
<feature type="binding site" description="axial binding residue" evidence="1">
    <location>
        <position position="495"/>
    </location>
    <ligand>
        <name>heme</name>
        <dbReference type="ChEBI" id="CHEBI:30413"/>
    </ligand>
    <ligandPart>
        <name>Fe</name>
        <dbReference type="ChEBI" id="CHEBI:18248"/>
    </ligandPart>
</feature>
<feature type="mutagenesis site" description="In pla1-2; dwarf, and rapid initiation and emergence of vegetative leaves." evidence="3">
    <original>A</original>
    <variation>V</variation>
    <location>
        <position position="421"/>
    </location>
</feature>
<feature type="mutagenesis site" description="In pla1-3; dwarf, and rapid initiation and emergence of vegetative leaves." evidence="3">
    <original>P</original>
    <variation>S</variation>
    <location>
        <position position="496"/>
    </location>
</feature>
<feature type="sequence conflict" description="In Ref. 1; BAC76730." evidence="6" ref="1">
    <original>G</original>
    <variation>D</variation>
    <location>
        <position position="480"/>
    </location>
</feature>
<feature type="sequence conflict" description="In Ref. 1; BAC76730." evidence="6" ref="1">
    <original>T</original>
    <variation>S</variation>
    <location>
        <position position="506"/>
    </location>
</feature>
<sequence>MAMATATASSCVDATWWAYALPALLGADTLCAHPALLAGAVLLAFATAAVLAWAASPGGPAWAHGRGRLGATPIEGPRGLPVFGSIFALSRGLPHRALDAMSRDAAAPRARELMAFSVGETPAVVSSCPATAREVLAHPSFADRPLKRSARELLFARAIGFAPSGEYWRLLRRIASTHLFSPRRVAAHEPGRQADATAMLSAMAAEQSATGAVVLRPHLQAAALNNIMGSVFGRRYDVSSSSGAAADEAEQLKSMVREGFELLGAFNWSDHLPWLAHLYDPNHVARRCAALVPRVQAFVRGVIRDHRLRRDSSSTAADNADFVDVLLSLEAHENLAEDDMVAVLWEMIFRGTDTTALVTEWCMAEVVRNPAVQARLRAEVDAAVGGDGCPSDGDVARMPYLQAVVKETLRAHPPGPLLSWARLATADVGLANGMVVPAGTTAMVNMWAITHDGEVWADPEAFAPERFIPSEGGADVDVRGGDLRLAPFGAGRRVCPGKNLGLATVTLWVARLVHAFDWFLPDGSPPVSLDEVLKLSLEMKTPLAAAATPRRRRAA</sequence>
<comment type="function">
    <text evidence="3">Involved in the regular timing (plastochron) of lateral organs formation. May regulate the rate of leaf initiation and the duration of vegetative phase. Seems to be redundant to the function of PLASTOCHRON2, but to act in an independent pathway.</text>
</comment>
<comment type="cofactor">
    <cofactor evidence="1">
        <name>heme</name>
        <dbReference type="ChEBI" id="CHEBI:30413"/>
    </cofactor>
</comment>
<comment type="subcellular location">
    <subcellularLocation>
        <location evidence="6">Membrane</location>
        <topology evidence="6">Single-pass membrane protein</topology>
    </subcellularLocation>
</comment>
<comment type="tissue specificity">
    <text evidence="3">Expressed in seedlings, shoot apices and young panicles, but not in mature leaves, calli and roots.</text>
</comment>
<comment type="developmental stage">
    <text evidence="3">Expressed in plastochron 0 (P0) leaf founder cells, and leaf plastochrons P1, P2 and P3 primordia, but not beyond. Expressed in developing bract leaves and their incipient primordia of young inflorescence apices. Down-regulated in developing spikelets.</text>
</comment>
<comment type="disruption phenotype">
    <text evidence="3 4 5">Plants double the number of leaves, and leaf size and plant height are reduced to about the half that of the wild-type. Some inflorescence branches are converted into vegetative shoots (PubMed:14711998, PubMed:9724697). Late flowering and excessive vegetative growth (PubMed:19337211).</text>
</comment>
<comment type="miscellaneous">
    <text>Plastochron is defined as the time interval between leaf initiation events.</text>
</comment>
<comment type="similarity">
    <text evidence="6">Belongs to the cytochrome P450 family.</text>
</comment>
<accession>Q7Y1V5</accession>
<accession>A0A0P0XUQ2</accession>
<accession>Q0IY05</accession>
<accession>Q8LND2</accession>
<organism>
    <name type="scientific">Oryza sativa subsp. japonica</name>
    <name type="common">Rice</name>
    <dbReference type="NCBI Taxonomy" id="39947"/>
    <lineage>
        <taxon>Eukaryota</taxon>
        <taxon>Viridiplantae</taxon>
        <taxon>Streptophyta</taxon>
        <taxon>Embryophyta</taxon>
        <taxon>Tracheophyta</taxon>
        <taxon>Spermatophyta</taxon>
        <taxon>Magnoliopsida</taxon>
        <taxon>Liliopsida</taxon>
        <taxon>Poales</taxon>
        <taxon>Poaceae</taxon>
        <taxon>BOP clade</taxon>
        <taxon>Oryzoideae</taxon>
        <taxon>Oryzeae</taxon>
        <taxon>Oryzinae</taxon>
        <taxon>Oryza</taxon>
        <taxon>Oryza sativa</taxon>
    </lineage>
</organism>